<protein>
    <recommendedName>
        <fullName evidence="1">Large ribosomal subunit protein bL9</fullName>
    </recommendedName>
    <alternativeName>
        <fullName evidence="2">50S ribosomal protein L9</fullName>
    </alternativeName>
</protein>
<gene>
    <name evidence="1" type="primary">rplI</name>
    <name type="ordered locus">NMB1320</name>
</gene>
<comment type="function">
    <text evidence="1">Binds to the 23S rRNA.</text>
</comment>
<comment type="similarity">
    <text evidence="1">Belongs to the bacterial ribosomal protein bL9 family.</text>
</comment>
<reference key="1">
    <citation type="journal article" date="2000" name="Science">
        <title>Complete genome sequence of Neisseria meningitidis serogroup B strain MC58.</title>
        <authorList>
            <person name="Tettelin H."/>
            <person name="Saunders N.J."/>
            <person name="Heidelberg J.F."/>
            <person name="Jeffries A.C."/>
            <person name="Nelson K.E."/>
            <person name="Eisen J.A."/>
            <person name="Ketchum K.A."/>
            <person name="Hood D.W."/>
            <person name="Peden J.F."/>
            <person name="Dodson R.J."/>
            <person name="Nelson W.C."/>
            <person name="Gwinn M.L."/>
            <person name="DeBoy R.T."/>
            <person name="Peterson J.D."/>
            <person name="Hickey E.K."/>
            <person name="Haft D.H."/>
            <person name="Salzberg S.L."/>
            <person name="White O."/>
            <person name="Fleischmann R.D."/>
            <person name="Dougherty B.A."/>
            <person name="Mason T.M."/>
            <person name="Ciecko A."/>
            <person name="Parksey D.S."/>
            <person name="Blair E."/>
            <person name="Cittone H."/>
            <person name="Clark E.B."/>
            <person name="Cotton M.D."/>
            <person name="Utterback T.R."/>
            <person name="Khouri H.M."/>
            <person name="Qin H."/>
            <person name="Vamathevan J.J."/>
            <person name="Gill J."/>
            <person name="Scarlato V."/>
            <person name="Masignani V."/>
            <person name="Pizza M."/>
            <person name="Grandi G."/>
            <person name="Sun L."/>
            <person name="Smith H.O."/>
            <person name="Fraser C.M."/>
            <person name="Moxon E.R."/>
            <person name="Rappuoli R."/>
            <person name="Venter J.C."/>
        </authorList>
    </citation>
    <scope>NUCLEOTIDE SEQUENCE [LARGE SCALE GENOMIC DNA]</scope>
    <source>
        <strain>ATCC BAA-335 / MC58</strain>
    </source>
</reference>
<feature type="chain" id="PRO_0000176659" description="Large ribosomal subunit protein bL9">
    <location>
        <begin position="1"/>
        <end position="150"/>
    </location>
</feature>
<dbReference type="EMBL" id="AE002098">
    <property type="protein sequence ID" value="AAF41695.1"/>
    <property type="molecule type" value="Genomic_DNA"/>
</dbReference>
<dbReference type="PIR" id="G81096">
    <property type="entry name" value="G81096"/>
</dbReference>
<dbReference type="RefSeq" id="NP_274339.1">
    <property type="nucleotide sequence ID" value="NC_003112.2"/>
</dbReference>
<dbReference type="RefSeq" id="WP_002213307.1">
    <property type="nucleotide sequence ID" value="NC_003112.2"/>
</dbReference>
<dbReference type="SMR" id="Q9JZ31"/>
<dbReference type="FunCoup" id="Q9JZ31">
    <property type="interactions" value="637"/>
</dbReference>
<dbReference type="STRING" id="122586.NMB1320"/>
<dbReference type="PaxDb" id="122586-NMB1320"/>
<dbReference type="KEGG" id="nme:NMB1320"/>
<dbReference type="PATRIC" id="fig|122586.8.peg.1656"/>
<dbReference type="HOGENOM" id="CLU_078938_4_1_4"/>
<dbReference type="InParanoid" id="Q9JZ31"/>
<dbReference type="OrthoDB" id="9788336at2"/>
<dbReference type="Proteomes" id="UP000000425">
    <property type="component" value="Chromosome"/>
</dbReference>
<dbReference type="GO" id="GO:0022625">
    <property type="term" value="C:cytosolic large ribosomal subunit"/>
    <property type="evidence" value="ECO:0000318"/>
    <property type="project" value="GO_Central"/>
</dbReference>
<dbReference type="GO" id="GO:0019843">
    <property type="term" value="F:rRNA binding"/>
    <property type="evidence" value="ECO:0007669"/>
    <property type="project" value="UniProtKB-UniRule"/>
</dbReference>
<dbReference type="GO" id="GO:0003735">
    <property type="term" value="F:structural constituent of ribosome"/>
    <property type="evidence" value="ECO:0007669"/>
    <property type="project" value="InterPro"/>
</dbReference>
<dbReference type="GO" id="GO:0006412">
    <property type="term" value="P:translation"/>
    <property type="evidence" value="ECO:0007669"/>
    <property type="project" value="UniProtKB-UniRule"/>
</dbReference>
<dbReference type="FunFam" id="3.10.430.100:FF:000010">
    <property type="entry name" value="50S ribosomal protein L9"/>
    <property type="match status" value="1"/>
</dbReference>
<dbReference type="Gene3D" id="3.10.430.100">
    <property type="entry name" value="Ribosomal protein L9, C-terminal domain"/>
    <property type="match status" value="1"/>
</dbReference>
<dbReference type="Gene3D" id="3.40.5.10">
    <property type="entry name" value="Ribosomal protein L9, N-terminal domain"/>
    <property type="match status" value="1"/>
</dbReference>
<dbReference type="HAMAP" id="MF_00503">
    <property type="entry name" value="Ribosomal_bL9"/>
    <property type="match status" value="1"/>
</dbReference>
<dbReference type="InterPro" id="IPR000244">
    <property type="entry name" value="Ribosomal_bL9"/>
</dbReference>
<dbReference type="InterPro" id="IPR009027">
    <property type="entry name" value="Ribosomal_bL9/RNase_H1_N"/>
</dbReference>
<dbReference type="InterPro" id="IPR020594">
    <property type="entry name" value="Ribosomal_bL9_bac/chp"/>
</dbReference>
<dbReference type="InterPro" id="IPR020069">
    <property type="entry name" value="Ribosomal_bL9_C"/>
</dbReference>
<dbReference type="InterPro" id="IPR036791">
    <property type="entry name" value="Ribosomal_bL9_C_sf"/>
</dbReference>
<dbReference type="InterPro" id="IPR020070">
    <property type="entry name" value="Ribosomal_bL9_N"/>
</dbReference>
<dbReference type="InterPro" id="IPR036935">
    <property type="entry name" value="Ribosomal_bL9_N_sf"/>
</dbReference>
<dbReference type="NCBIfam" id="TIGR00158">
    <property type="entry name" value="L9"/>
    <property type="match status" value="1"/>
</dbReference>
<dbReference type="PANTHER" id="PTHR21368">
    <property type="entry name" value="50S RIBOSOMAL PROTEIN L9"/>
    <property type="match status" value="1"/>
</dbReference>
<dbReference type="Pfam" id="PF03948">
    <property type="entry name" value="Ribosomal_L9_C"/>
    <property type="match status" value="1"/>
</dbReference>
<dbReference type="Pfam" id="PF01281">
    <property type="entry name" value="Ribosomal_L9_N"/>
    <property type="match status" value="1"/>
</dbReference>
<dbReference type="SUPFAM" id="SSF55658">
    <property type="entry name" value="L9 N-domain-like"/>
    <property type="match status" value="1"/>
</dbReference>
<dbReference type="SUPFAM" id="SSF55653">
    <property type="entry name" value="Ribosomal protein L9 C-domain"/>
    <property type="match status" value="1"/>
</dbReference>
<dbReference type="PROSITE" id="PS00651">
    <property type="entry name" value="RIBOSOMAL_L9"/>
    <property type="match status" value="1"/>
</dbReference>
<name>RL9_NEIMB</name>
<organism>
    <name type="scientific">Neisseria meningitidis serogroup B (strain ATCC BAA-335 / MC58)</name>
    <dbReference type="NCBI Taxonomy" id="122586"/>
    <lineage>
        <taxon>Bacteria</taxon>
        <taxon>Pseudomonadati</taxon>
        <taxon>Pseudomonadota</taxon>
        <taxon>Betaproteobacteria</taxon>
        <taxon>Neisseriales</taxon>
        <taxon>Neisseriaceae</taxon>
        <taxon>Neisseria</taxon>
    </lineage>
</organism>
<sequence>MQIILLEKIGGLGNLGDIVTVKNGYARNFLIPAGKAKRATEANMKEFEARRAELEAKQAEILADARVRQEKLDGQTVTVAQKAGVDGRLFGSVTNADIAAAIVAAGIEAVKANVRLPNGPLKAVGEYEVEVALHTDAVAKITVAVVAATE</sequence>
<evidence type="ECO:0000255" key="1">
    <source>
        <dbReference type="HAMAP-Rule" id="MF_00503"/>
    </source>
</evidence>
<evidence type="ECO:0000305" key="2"/>
<keyword id="KW-1185">Reference proteome</keyword>
<keyword id="KW-0687">Ribonucleoprotein</keyword>
<keyword id="KW-0689">Ribosomal protein</keyword>
<keyword id="KW-0694">RNA-binding</keyword>
<keyword id="KW-0699">rRNA-binding</keyword>
<accession>Q9JZ31</accession>
<proteinExistence type="inferred from homology"/>